<organism>
    <name type="scientific">Drosophila melanogaster</name>
    <name type="common">Fruit fly</name>
    <dbReference type="NCBI Taxonomy" id="7227"/>
    <lineage>
        <taxon>Eukaryota</taxon>
        <taxon>Metazoa</taxon>
        <taxon>Ecdysozoa</taxon>
        <taxon>Arthropoda</taxon>
        <taxon>Hexapoda</taxon>
        <taxon>Insecta</taxon>
        <taxon>Pterygota</taxon>
        <taxon>Neoptera</taxon>
        <taxon>Endopterygota</taxon>
        <taxon>Diptera</taxon>
        <taxon>Brachycera</taxon>
        <taxon>Muscomorpha</taxon>
        <taxon>Ephydroidea</taxon>
        <taxon>Drosophilidae</taxon>
        <taxon>Drosophila</taxon>
        <taxon>Sophophora</taxon>
    </lineage>
</organism>
<keyword id="KW-0175">Coiled coil</keyword>
<keyword id="KW-0963">Cytoplasm</keyword>
<keyword id="KW-0206">Cytoskeleton</keyword>
<keyword id="KW-0472">Membrane</keyword>
<keyword id="KW-0539">Nucleus</keyword>
<keyword id="KW-1185">Reference proteome</keyword>
<keyword id="KW-0812">Transmembrane</keyword>
<keyword id="KW-1133">Transmembrane helix</keyword>
<name>KLAR_DROME</name>
<sequence>MEMQQENETGREGVIPNSEKEVALISNQETEKAAMISGGKEGSVRDLESPNETATTQKIEHTTKPLKLDGIFAMPATPPNKAGLATKSASSSRSSSLKKQRRGSRGSANLNVAGMGDGAPKRSAPGGGQLNYGTNSVGNDLMKQSQSMTSLKASNEEQQESRDVIQAKLHLERPYNSLKKNSHSNKMHRYSWGSGNSQCSSTSLHSSATLGLGSSGKDDLWAAIQTNYNYIMDTNLLDTCKEARCEIEGAATVLEKSSECSFKMLDETQRPEGLCEDPKELRRSWREMENKLESSPTITELTLFGNAELQRHLAVHSVLYHEIASHARVVSSCIRAAEKEQQLQQQQQLSSQQPASLTSNCSSESTSESATKSSSLSSGFASDPVTTPIGTAAAAPPSSSTHPSKKGEGNLERLRDRYHLLYLKAFELQLCLDNLLRKRSSAANGLDDDEDEEEDTEDDSFGYEGEATEDDLNEVNSDLDLENSESKSATPAELILQRCQIAATQIVCGLDETQSQSRSQQVPSQAKSPSADQPRDCLAPQKPGDEADEELEEEDEDPDIGTDVVDFLIAKRSWRQVNHPNPSGTATLTDFEADSESSDFEQVQQLSRRGLPPTVGSTRRVLNLIEMPQSSNTNISSSNSLLQQRNHNIGNKMLPNKAHGKNIAVAVITPNSHGNTSHGHGLGHGLGHELNKSPLGLRKTRHHHNDTSKFNRSNRKSKNCAIFYFKHLDTDNEQGNAAGSDLQSEDDPSLIHRRRAGGDILKSADASTDDDDEGCLYTATAAATLEVATAATAAPTAAAATSSVDGLQSTAVSSTTATGGPLPPSDDSDKENKVALVSASTITAARTATATSIATLHSSNYDSSSACSSSNSNSNSNSNSNGRLTETSATSRVTQLQMQIHSQSQSQSQMELQINGNAIDGRHIISNNNCYSSMQHQPQNNNEGEAAEDLAKIKMGDDEAAADMANGNATKSQQMSNGVYSRADSCNFTVWAAETVASCHLPPRSPAKSAKSTKSQASNATVSGSTLVSPVKGKVSHDSIKQLVLKAEHLVRDAQETALKTPTKQKHSIIKISSTVKKREVTMPHPIKQRVEEWLEHQPSTPQLLTRSHTNELLPSCKPDDCEASGEASETDSVPQAGAGVNGGAPNGAGSDTSEGFTDSIATCMQTSTNSYGNSTERIGGSAEPIGQPVTPLGFGSSNQSLNVKIVKRSQTRRKSERPWSVSCLSQLTTDAAQLTTARIVENSPSGLASHSISESALDSLSPGPRPRAASSSGTGSNAAKKADSKGSLRRRKARKKRISAASAGRKSDSGSELGGDLTQTLMKSCESMSSQQLQEFTNALLSIQKGAVVAPLSPKGEVSGVPSLHDGEGGETQLMLPKFRVGSFTTAGLLATDTRLGALAALSNYMNEDEQQAELSTEDHHSSISETAWDNYQEKYNSENYSEGFDSDAARRLLEFGDDYRNFIDSQSDCCSSLSAANNLDSFSPPRMDSLQKHELKSLHINQDTITSSVDHARRQRALELQYERRRKTLEVRRKSCQDMDESLMASPQSDQQQQQLQVTPSLSASATALMTTPKNQSTSHQISHRAESVGRKLDFGGMSHSAQSLLRRTSESDTSTRRRRTVTADERRRSSRNLEKCIKLIPATTSSSSGSDSEDGEQEMRSLLQQSRDRLDDTRALKIRCHLLRPEDYNEIINTCRDNIRCLEAVLRGPPGTVLSNHCAGQTKDLLGAWEDLLSWSENASAARKLQQEMSVLKSSLQRLGDKPTPELLDTEPAIQIAVEALKLEQTQLTSYRTNMLRLNASVHSWLTKQERRLQSALEEQEQQQESEQLKQQKLVEEEKGADVQKELASTGAVAITVTDSNGNQVEALATGEASTSTPAWDVHSLMSSEQEFHKHLKNEVSDMYSAWDEADARINTQLEMLTNSLIAWRQLESGLSEFQLALGQDRGTLKGLEGALDKGQATPVELAQNVKLVAKLLSEKVHVSQEQLLAVQQHLDPNHIYHITKFTASNGSLSDSGISDGGATSDGGLSERERRLGVLRRLAKQLELALAPGSEAMRSIAARMESAEADLKHLQNTCRDLIVRTAASHQQKQQIQQNQTQQVSPKANGHIKKQAAKGKAEPQSPGRRGKGARKARQAKKAGEDQQVEEPSLSPEQQKMVLKQLKTLTSGDGGDDPSDDPSLLFNLESSEEDGEGADPAQTSKRGWAWRIARAAVPMQVALFTIFCAACLMQPNCCDNLNNLSMSFTPQLRYIRGPPPI</sequence>
<protein>
    <recommendedName>
        <fullName evidence="12">Klarsicht protein</fullName>
    </recommendedName>
</protein>
<feature type="chain" id="PRO_0000454908" description="Klarsicht protein">
    <location>
        <begin position="1"/>
        <end position="2262"/>
    </location>
</feature>
<feature type="topological domain" description="Cytoplasmic" evidence="3">
    <location>
        <begin position="1"/>
        <end position="2215"/>
    </location>
</feature>
<feature type="transmembrane region" description="Helical; Anchor for type IV membrane protein" evidence="3">
    <location>
        <begin position="2216"/>
        <end position="2236"/>
    </location>
</feature>
<feature type="topological domain" description="Perinuclear space" evidence="3">
    <location>
        <begin position="2237"/>
        <end position="2262"/>
    </location>
</feature>
<feature type="domain" description="KASH" evidence="3">
    <location>
        <begin position="2207"/>
        <end position="2262"/>
    </location>
</feature>
<feature type="region of interest" description="Required for apical microtubules localization" evidence="7">
    <location>
        <begin position="1"/>
        <end position="1774"/>
    </location>
</feature>
<feature type="region of interest" description="Disordered" evidence="4">
    <location>
        <begin position="1"/>
        <end position="140"/>
    </location>
</feature>
<feature type="region of interest" description="Disordered" evidence="4">
    <location>
        <begin position="345"/>
        <end position="410"/>
    </location>
</feature>
<feature type="region of interest" description="Disordered" evidence="4">
    <location>
        <begin position="442"/>
        <end position="475"/>
    </location>
</feature>
<feature type="region of interest" description="Disordered" evidence="4">
    <location>
        <begin position="514"/>
        <end position="561"/>
    </location>
</feature>
<feature type="region of interest" description="Disordered" evidence="4">
    <location>
        <begin position="800"/>
        <end position="832"/>
    </location>
</feature>
<feature type="region of interest" description="Disordered" evidence="4">
    <location>
        <begin position="859"/>
        <end position="898"/>
    </location>
</feature>
<feature type="region of interest" description="Disordered" evidence="4">
    <location>
        <begin position="1000"/>
        <end position="1031"/>
    </location>
</feature>
<feature type="region of interest" description="Disordered" evidence="4">
    <location>
        <begin position="1115"/>
        <end position="1157"/>
    </location>
</feature>
<feature type="region of interest" description="Disordered" evidence="4">
    <location>
        <begin position="1246"/>
        <end position="1316"/>
    </location>
</feature>
<feature type="region of interest" description="Disordered" evidence="4">
    <location>
        <begin position="1533"/>
        <end position="1670"/>
    </location>
</feature>
<feature type="region of interest" description="Disordered" evidence="4">
    <location>
        <begin position="2092"/>
        <end position="2205"/>
    </location>
</feature>
<feature type="coiled-coil region" evidence="2">
    <location>
        <begin position="1809"/>
        <end position="1842"/>
    </location>
</feature>
<feature type="compositionally biased region" description="Basic and acidic residues" evidence="4">
    <location>
        <begin position="58"/>
        <end position="67"/>
    </location>
</feature>
<feature type="compositionally biased region" description="Polar residues" evidence="4">
    <location>
        <begin position="131"/>
        <end position="140"/>
    </location>
</feature>
<feature type="compositionally biased region" description="Low complexity" evidence="4">
    <location>
        <begin position="345"/>
        <end position="402"/>
    </location>
</feature>
<feature type="compositionally biased region" description="Acidic residues" evidence="4">
    <location>
        <begin position="446"/>
        <end position="475"/>
    </location>
</feature>
<feature type="compositionally biased region" description="Low complexity" evidence="4">
    <location>
        <begin position="514"/>
        <end position="525"/>
    </location>
</feature>
<feature type="compositionally biased region" description="Acidic residues" evidence="4">
    <location>
        <begin position="546"/>
        <end position="560"/>
    </location>
</feature>
<feature type="compositionally biased region" description="Low complexity" evidence="4">
    <location>
        <begin position="809"/>
        <end position="818"/>
    </location>
</feature>
<feature type="compositionally biased region" description="Low complexity" evidence="4">
    <location>
        <begin position="859"/>
        <end position="881"/>
    </location>
</feature>
<feature type="compositionally biased region" description="Polar residues" evidence="4">
    <location>
        <begin position="882"/>
        <end position="894"/>
    </location>
</feature>
<feature type="compositionally biased region" description="Low complexity" evidence="4">
    <location>
        <begin position="1006"/>
        <end position="1018"/>
    </location>
</feature>
<feature type="compositionally biased region" description="Polar residues" evidence="4">
    <location>
        <begin position="1019"/>
        <end position="1028"/>
    </location>
</feature>
<feature type="compositionally biased region" description="Polar residues" evidence="4">
    <location>
        <begin position="1246"/>
        <end position="1259"/>
    </location>
</feature>
<feature type="compositionally biased region" description="Low complexity" evidence="4">
    <location>
        <begin position="1267"/>
        <end position="1280"/>
    </location>
</feature>
<feature type="compositionally biased region" description="Basic residues" evidence="4">
    <location>
        <begin position="1288"/>
        <end position="1299"/>
    </location>
</feature>
<feature type="compositionally biased region" description="Low complexity" evidence="4">
    <location>
        <begin position="1550"/>
        <end position="1559"/>
    </location>
</feature>
<feature type="compositionally biased region" description="Polar residues" evidence="4">
    <location>
        <begin position="1560"/>
        <end position="1583"/>
    </location>
</feature>
<feature type="compositionally biased region" description="Basic and acidic residues" evidence="4">
    <location>
        <begin position="1586"/>
        <end position="1596"/>
    </location>
</feature>
<feature type="compositionally biased region" description="Basic and acidic residues" evidence="4">
    <location>
        <begin position="1610"/>
        <end position="1640"/>
    </location>
</feature>
<feature type="compositionally biased region" description="Low complexity" evidence="4">
    <location>
        <begin position="2093"/>
        <end position="2105"/>
    </location>
</feature>
<feature type="compositionally biased region" description="Basic residues" evidence="4">
    <location>
        <begin position="2130"/>
        <end position="2142"/>
    </location>
</feature>
<accession>Q9Y0E4</accession>
<evidence type="ECO:0000250" key="1">
    <source>
        <dbReference type="UniProtKB" id="Q8WXH0"/>
    </source>
</evidence>
<evidence type="ECO:0000255" key="2"/>
<evidence type="ECO:0000255" key="3">
    <source>
        <dbReference type="PROSITE-ProRule" id="PRU00385"/>
    </source>
</evidence>
<evidence type="ECO:0000256" key="4">
    <source>
        <dbReference type="SAM" id="MobiDB-lite"/>
    </source>
</evidence>
<evidence type="ECO:0000269" key="5">
    <source>
    </source>
</evidence>
<evidence type="ECO:0000269" key="6">
    <source>
    </source>
</evidence>
<evidence type="ECO:0000269" key="7">
    <source>
    </source>
</evidence>
<evidence type="ECO:0000269" key="8">
    <source>
    </source>
</evidence>
<evidence type="ECO:0000269" key="9">
    <source>
    </source>
</evidence>
<evidence type="ECO:0000269" key="10">
    <source>
    </source>
</evidence>
<evidence type="ECO:0000269" key="11">
    <source>
    </source>
</evidence>
<evidence type="ECO:0000303" key="12">
    <source>
    </source>
</evidence>
<evidence type="ECO:0000305" key="13"/>
<evidence type="ECO:0000312" key="14">
    <source>
        <dbReference type="FlyBase" id="FBgn0001316"/>
    </source>
</evidence>
<comment type="function">
    <text evidence="1 5 7 9">Component of the LINC (LInker of Nucleoskeleton and Cytoskeleton) complex involved in the connection between the nuclear lamina and the cytoskeleton (By similarity). Plays a role in the nuclear positioning and links the nucleus to the microtubule organizing center (MTOC) (PubMed:10556085, PubMed:15579692, PubMed:22927463). Collaborates with Klar to promote even spacing of the myonuclei at the periphery of striated muscle fibers by mediating a tight association between a nuclear ring structure of Msp300 and the plus ends of a unique astral microtubule (MT) network (PubMed:22927463).</text>
</comment>
<comment type="subunit">
    <text evidence="1 9 10">Core component of LINC complexes which are composed of inner nuclear membrane SUN domain-containing proteins coupled to outer nuclear membrane KASH domain-containing nesprins (By similarity). Interacts with kud (PubMed:28716842). Interacts with Msp300; this interaction allows the anchoring of Msp300 nuclear ring structure to the nuclear envelope (PubMed:22927463).</text>
</comment>
<comment type="interaction">
    <interactant intactId="EBI-458693">
        <id>Q9Y0E4</id>
    </interactant>
    <interactant intactId="EBI-190558">
        <id>Q9VVA8</id>
        <label>kud</label>
    </interactant>
    <organismsDiffer>false</organismsDiffer>
    <experiments>3</experiments>
</comment>
<comment type="subcellular location">
    <subcellularLocation>
        <location evidence="11">Cytoplasm</location>
        <location evidence="11">Cytoskeleton</location>
        <location evidence="11">Microtubule organizing center</location>
    </subcellularLocation>
    <subcellularLocation>
        <location evidence="5 7 8 9 11">Cytoplasm</location>
        <location evidence="5 7 8 9 11">Perinuclear region</location>
    </subcellularLocation>
    <subcellularLocation>
        <location evidence="6 7 8">Nucleus membrane</location>
    </subcellularLocation>
    <subcellularLocation>
        <location evidence="6">Nucleus envelope</location>
    </subcellularLocation>
    <text evidence="6 7 8 11">Associated with microtubules, both apical to the nucleus and also at the basal-most area of the eye disk (PubMed:14617811, PubMed:15579692, PubMed:18820457). Koi is required for perinuclear localization of Klar (PubMed:18820457). Nuclear envelope localization requires nuclear lam (PubMed:14617811). In the fat body, localizes to a perinuclear non-centrosomal microtubule-organizing centers (ncMTOCs) (PubMed:32066907).</text>
</comment>
<comment type="tissue specificity">
    <text evidence="8">Expressed ubiquitously in the eye disk, but at much higher levels posterior to the morphogenetic furrow (PubMed:18820457). Expressed in R-cells and also in non-neural cone cells (PubMed:18820457).</text>
</comment>
<comment type="domain">
    <text evidence="7 9">The KASH domain mediates localization to the nuclear membrane (PubMed:15579692). Msp300 and Klar KASH domains cooperate to mediate the connection between a nuclear ring structure of Msp300 and the plus ends of a unique astral microtubule (MT) network (PubMed:22927463).</text>
</comment>
<comment type="disruption phenotype">
    <text evidence="8 10 11">Homozygous mutant flies are viable and fertile but have eye defects; photoreceptor nuclei fail to migrate apically as they are specified, resulting in aberrantly shaped photoreceptors in adult eyes (PubMed:28716842). In larval mutants eye disks, both the R-cell and cone cell nuclei are positioned randomly within the apical/basal axis (PubMed:18820457). RNAi-mediated knockdown has no effect on nuclear positioning in fat body cells (PubMed:32066907).</text>
</comment>
<comment type="similarity">
    <text evidence="13">Belongs to the nesprin family.</text>
</comment>
<gene>
    <name evidence="14" type="primary">klar</name>
    <name evidence="14" type="ORF">CG17046</name>
</gene>
<reference key="1">
    <citation type="journal article" date="1999" name="Curr. Biol.">
        <title>Molecular analysis of the klarsicht gene and its role in nuclear migration within differentiating cells of the Drosophila eye.</title>
        <authorList>
            <person name="Mosley-Bishop K.L."/>
            <person name="Li Q."/>
            <person name="Patterson L."/>
            <person name="Fischer J.A."/>
        </authorList>
    </citation>
    <scope>NUCLEOTIDE SEQUENCE [MRNA]</scope>
    <scope>DISRUPTION PHENOTYPE</scope>
    <scope>SUBCELLULAR LOCATION</scope>
    <scope>FUNCTION</scope>
</reference>
<reference key="2">
    <citation type="journal article" date="2000" name="Science">
        <title>The genome sequence of Drosophila melanogaster.</title>
        <authorList>
            <person name="Adams M.D."/>
            <person name="Celniker S.E."/>
            <person name="Holt R.A."/>
            <person name="Evans C.A."/>
            <person name="Gocayne J.D."/>
            <person name="Amanatides P.G."/>
            <person name="Scherer S.E."/>
            <person name="Li P.W."/>
            <person name="Hoskins R.A."/>
            <person name="Galle R.F."/>
            <person name="George R.A."/>
            <person name="Lewis S.E."/>
            <person name="Richards S."/>
            <person name="Ashburner M."/>
            <person name="Henderson S.N."/>
            <person name="Sutton G.G."/>
            <person name="Wortman J.R."/>
            <person name="Yandell M.D."/>
            <person name="Zhang Q."/>
            <person name="Chen L.X."/>
            <person name="Brandon R.C."/>
            <person name="Rogers Y.-H.C."/>
            <person name="Blazej R.G."/>
            <person name="Champe M."/>
            <person name="Pfeiffer B.D."/>
            <person name="Wan K.H."/>
            <person name="Doyle C."/>
            <person name="Baxter E.G."/>
            <person name="Helt G."/>
            <person name="Nelson C.R."/>
            <person name="Miklos G.L.G."/>
            <person name="Abril J.F."/>
            <person name="Agbayani A."/>
            <person name="An H.-J."/>
            <person name="Andrews-Pfannkoch C."/>
            <person name="Baldwin D."/>
            <person name="Ballew R.M."/>
            <person name="Basu A."/>
            <person name="Baxendale J."/>
            <person name="Bayraktaroglu L."/>
            <person name="Beasley E.M."/>
            <person name="Beeson K.Y."/>
            <person name="Benos P.V."/>
            <person name="Berman B.P."/>
            <person name="Bhandari D."/>
            <person name="Bolshakov S."/>
            <person name="Borkova D."/>
            <person name="Botchan M.R."/>
            <person name="Bouck J."/>
            <person name="Brokstein P."/>
            <person name="Brottier P."/>
            <person name="Burtis K.C."/>
            <person name="Busam D.A."/>
            <person name="Butler H."/>
            <person name="Cadieu E."/>
            <person name="Center A."/>
            <person name="Chandra I."/>
            <person name="Cherry J.M."/>
            <person name="Cawley S."/>
            <person name="Dahlke C."/>
            <person name="Davenport L.B."/>
            <person name="Davies P."/>
            <person name="de Pablos B."/>
            <person name="Delcher A."/>
            <person name="Deng Z."/>
            <person name="Mays A.D."/>
            <person name="Dew I."/>
            <person name="Dietz S.M."/>
            <person name="Dodson K."/>
            <person name="Doup L.E."/>
            <person name="Downes M."/>
            <person name="Dugan-Rocha S."/>
            <person name="Dunkov B.C."/>
            <person name="Dunn P."/>
            <person name="Durbin K.J."/>
            <person name="Evangelista C.C."/>
            <person name="Ferraz C."/>
            <person name="Ferriera S."/>
            <person name="Fleischmann W."/>
            <person name="Fosler C."/>
            <person name="Gabrielian A.E."/>
            <person name="Garg N.S."/>
            <person name="Gelbart W.M."/>
            <person name="Glasser K."/>
            <person name="Glodek A."/>
            <person name="Gong F."/>
            <person name="Gorrell J.H."/>
            <person name="Gu Z."/>
            <person name="Guan P."/>
            <person name="Harris M."/>
            <person name="Harris N.L."/>
            <person name="Harvey D.A."/>
            <person name="Heiman T.J."/>
            <person name="Hernandez J.R."/>
            <person name="Houck J."/>
            <person name="Hostin D."/>
            <person name="Houston K.A."/>
            <person name="Howland T.J."/>
            <person name="Wei M.-H."/>
            <person name="Ibegwam C."/>
            <person name="Jalali M."/>
            <person name="Kalush F."/>
            <person name="Karpen G.H."/>
            <person name="Ke Z."/>
            <person name="Kennison J.A."/>
            <person name="Ketchum K.A."/>
            <person name="Kimmel B.E."/>
            <person name="Kodira C.D."/>
            <person name="Kraft C.L."/>
            <person name="Kravitz S."/>
            <person name="Kulp D."/>
            <person name="Lai Z."/>
            <person name="Lasko P."/>
            <person name="Lei Y."/>
            <person name="Levitsky A.A."/>
            <person name="Li J.H."/>
            <person name="Li Z."/>
            <person name="Liang Y."/>
            <person name="Lin X."/>
            <person name="Liu X."/>
            <person name="Mattei B."/>
            <person name="McIntosh T.C."/>
            <person name="McLeod M.P."/>
            <person name="McPherson D."/>
            <person name="Merkulov G."/>
            <person name="Milshina N.V."/>
            <person name="Mobarry C."/>
            <person name="Morris J."/>
            <person name="Moshrefi A."/>
            <person name="Mount S.M."/>
            <person name="Moy M."/>
            <person name="Murphy B."/>
            <person name="Murphy L."/>
            <person name="Muzny D.M."/>
            <person name="Nelson D.L."/>
            <person name="Nelson D.R."/>
            <person name="Nelson K.A."/>
            <person name="Nixon K."/>
            <person name="Nusskern D.R."/>
            <person name="Pacleb J.M."/>
            <person name="Palazzolo M."/>
            <person name="Pittman G.S."/>
            <person name="Pan S."/>
            <person name="Pollard J."/>
            <person name="Puri V."/>
            <person name="Reese M.G."/>
            <person name="Reinert K."/>
            <person name="Remington K."/>
            <person name="Saunders R.D.C."/>
            <person name="Scheeler F."/>
            <person name="Shen H."/>
            <person name="Shue B.C."/>
            <person name="Siden-Kiamos I."/>
            <person name="Simpson M."/>
            <person name="Skupski M.P."/>
            <person name="Smith T.J."/>
            <person name="Spier E."/>
            <person name="Spradling A.C."/>
            <person name="Stapleton M."/>
            <person name="Strong R."/>
            <person name="Sun E."/>
            <person name="Svirskas R."/>
            <person name="Tector C."/>
            <person name="Turner R."/>
            <person name="Venter E."/>
            <person name="Wang A.H."/>
            <person name="Wang X."/>
            <person name="Wang Z.-Y."/>
            <person name="Wassarman D.A."/>
            <person name="Weinstock G.M."/>
            <person name="Weissenbach J."/>
            <person name="Williams S.M."/>
            <person name="Woodage T."/>
            <person name="Worley K.C."/>
            <person name="Wu D."/>
            <person name="Yang S."/>
            <person name="Yao Q.A."/>
            <person name="Ye J."/>
            <person name="Yeh R.-F."/>
            <person name="Zaveri J.S."/>
            <person name="Zhan M."/>
            <person name="Zhang G."/>
            <person name="Zhao Q."/>
            <person name="Zheng L."/>
            <person name="Zheng X.H."/>
            <person name="Zhong F.N."/>
            <person name="Zhong W."/>
            <person name="Zhou X."/>
            <person name="Zhu S.C."/>
            <person name="Zhu X."/>
            <person name="Smith H.O."/>
            <person name="Gibbs R.A."/>
            <person name="Myers E.W."/>
            <person name="Rubin G.M."/>
            <person name="Venter J.C."/>
        </authorList>
    </citation>
    <scope>NUCLEOTIDE SEQUENCE [LARGE SCALE GENOMIC DNA]</scope>
    <source>
        <strain>Berkeley</strain>
    </source>
</reference>
<reference key="3">
    <citation type="journal article" date="2002" name="Genome Biol.">
        <title>Annotation of the Drosophila melanogaster euchromatic genome: a systematic review.</title>
        <authorList>
            <person name="Misra S."/>
            <person name="Crosby M.A."/>
            <person name="Mungall C.J."/>
            <person name="Matthews B.B."/>
            <person name="Campbell K.S."/>
            <person name="Hradecky P."/>
            <person name="Huang Y."/>
            <person name="Kaminker J.S."/>
            <person name="Millburn G.H."/>
            <person name="Prochnik S.E."/>
            <person name="Smith C.D."/>
            <person name="Tupy J.L."/>
            <person name="Whitfield E.J."/>
            <person name="Bayraktaroglu L."/>
            <person name="Berman B.P."/>
            <person name="Bettencourt B.R."/>
            <person name="Celniker S.E."/>
            <person name="de Grey A.D.N.J."/>
            <person name="Drysdale R.A."/>
            <person name="Harris N.L."/>
            <person name="Richter J."/>
            <person name="Russo S."/>
            <person name="Schroeder A.J."/>
            <person name="Shu S.Q."/>
            <person name="Stapleton M."/>
            <person name="Yamada C."/>
            <person name="Ashburner M."/>
            <person name="Gelbart W.M."/>
            <person name="Rubin G.M."/>
            <person name="Lewis S.E."/>
        </authorList>
    </citation>
    <scope>GENOME REANNOTATION</scope>
    <source>
        <strain>Berkeley</strain>
    </source>
</reference>
<reference key="4">
    <citation type="journal article" date="2004" name="Genetics">
        <title>Drosophila klarsicht has distinct subcellular localization domains for nuclear envelope and microtubule localization in the eye.</title>
        <authorList>
            <person name="Fischer J.A."/>
            <person name="Acosta S."/>
            <person name="Kenny A."/>
            <person name="Cater C."/>
            <person name="Robinson C."/>
            <person name="Hook J."/>
        </authorList>
    </citation>
    <scope>SUBCELLULAR LOCATION</scope>
    <scope>DOMAIN</scope>
    <scope>FUNCTION</scope>
    <scope>REGION</scope>
</reference>
<reference key="5">
    <citation type="journal article" date="2004" name="Mol. Biol. Cell">
        <title>The functions of Klarsicht and nuclear lamin in developmentally regulated nuclear migrations of photoreceptor cells in the Drosophila eye.</title>
        <authorList>
            <person name="Patterson K."/>
            <person name="Molofsky A.B."/>
            <person name="Robinson C."/>
            <person name="Acosta S."/>
            <person name="Cater C."/>
            <person name="Fischer J.A."/>
        </authorList>
    </citation>
    <scope>SUBCELLULAR LOCATION</scope>
</reference>
<reference key="6">
    <citation type="journal article" date="2007" name="Fly">
        <title>Drosophila klaroid encodes a SUN domain protein required for Klarsicht localization to the nuclear envelope and nuclear migration in the eye.</title>
        <authorList>
            <person name="Kracklauer M.P."/>
            <person name="Banks S.M."/>
            <person name="Xie X."/>
            <person name="Wu Y."/>
            <person name="Fischer J.A."/>
        </authorList>
    </citation>
    <scope>TISSUE SPECIFICITY</scope>
    <scope>SUBCELLULAR LOCATION</scope>
    <scope>DISRUPTION PHENOTYPE</scope>
</reference>
<reference key="7">
    <citation type="journal article" date="2012" name="J. Cell Biol.">
        <title>Organelle positioning in muscles requires cooperation between two KASH proteins and microtubules.</title>
        <authorList>
            <person name="Elhanany-Tamir H."/>
            <person name="Yu Y.V."/>
            <person name="Shnayder M."/>
            <person name="Jain A."/>
            <person name="Welte M."/>
            <person name="Volk T."/>
        </authorList>
    </citation>
    <scope>SUBCELLULAR LOCATION</scope>
    <scope>FUNCTION</scope>
    <scope>INTERACTION WITH MSP300</scope>
    <scope>DOMAIN</scope>
</reference>
<reference key="8">
    <citation type="journal article" date="2017" name="J. Cell Biol.">
        <title>Outer nuclear membrane protein Kuduk modulates the LINC complex and nuclear envelope architecture.</title>
        <authorList>
            <person name="Ding Z.Y."/>
            <person name="Wang Y.H."/>
            <person name="Huang Y.C."/>
            <person name="Lee M.C."/>
            <person name="Tseng M.J."/>
            <person name="Chi Y.H."/>
            <person name="Huang M.L."/>
        </authorList>
    </citation>
    <scope>INTERACTION WITH KUD</scope>
</reference>
<reference key="9">
    <citation type="journal article" date="2020" name="Nat. Cell Biol.">
        <title>A perinuclear microtubule-organizing centre controls nuclear positioning and basement membrane secretion.</title>
        <authorList>
            <person name="Zheng Y."/>
            <person name="Buchwalter R.A."/>
            <person name="Zheng C."/>
            <person name="Wight E.M."/>
            <person name="Chen J.V."/>
            <person name="Megraw T.L."/>
        </authorList>
    </citation>
    <scope>SUBCELLULAR LOCATION</scope>
    <scope>DISRUPTION PHENOTYPE</scope>
</reference>
<dbReference type="EMBL" id="AF157066">
    <property type="protein sequence ID" value="AAD43129.1"/>
    <property type="molecule type" value="mRNA"/>
</dbReference>
<dbReference type="EMBL" id="AE014296">
    <property type="status" value="NOT_ANNOTATED_CDS"/>
    <property type="molecule type" value="Genomic_DNA"/>
</dbReference>
<dbReference type="IntAct" id="Q9Y0E4">
    <property type="interactions" value="3"/>
</dbReference>
<dbReference type="GlyGen" id="Q9Y0E4">
    <property type="glycosylation" value="3 sites"/>
</dbReference>
<dbReference type="AGR" id="FB:FBgn0001316"/>
<dbReference type="FlyBase" id="FBgn0001316">
    <property type="gene designation" value="klar"/>
</dbReference>
<dbReference type="VEuPathDB" id="VectorBase:FBgn0001316"/>
<dbReference type="InParanoid" id="Q9Y0E4"/>
<dbReference type="OrthoDB" id="10041151at2759"/>
<dbReference type="ChiTaRS" id="klar">
    <property type="organism name" value="fly"/>
</dbReference>
<dbReference type="PRO" id="PR:Q9Y0E4"/>
<dbReference type="Proteomes" id="UP000000803">
    <property type="component" value="Chromosome 3L"/>
</dbReference>
<dbReference type="ExpressionAtlas" id="Q9Y0E4">
    <property type="expression patterns" value="baseline and differential"/>
</dbReference>
<dbReference type="GO" id="GO:0005737">
    <property type="term" value="C:cytoplasm"/>
    <property type="evidence" value="ECO:0000314"/>
    <property type="project" value="FlyBase"/>
</dbReference>
<dbReference type="GO" id="GO:0005874">
    <property type="term" value="C:microtubule"/>
    <property type="evidence" value="ECO:0000314"/>
    <property type="project" value="UniProtKB"/>
</dbReference>
<dbReference type="GO" id="GO:0005815">
    <property type="term" value="C:microtubule organizing center"/>
    <property type="evidence" value="ECO:0007669"/>
    <property type="project" value="UniProtKB-SubCell"/>
</dbReference>
<dbReference type="GO" id="GO:0005635">
    <property type="term" value="C:nuclear envelope"/>
    <property type="evidence" value="ECO:0000314"/>
    <property type="project" value="FlyBase"/>
</dbReference>
<dbReference type="GO" id="GO:0005640">
    <property type="term" value="C:nuclear outer membrane"/>
    <property type="evidence" value="ECO:0000314"/>
    <property type="project" value="FlyBase"/>
</dbReference>
<dbReference type="GO" id="GO:0048471">
    <property type="term" value="C:perinuclear region of cytoplasm"/>
    <property type="evidence" value="ECO:0000314"/>
    <property type="project" value="UniProtKB"/>
</dbReference>
<dbReference type="GO" id="GO:0019894">
    <property type="term" value="F:kinesin binding"/>
    <property type="evidence" value="ECO:0000314"/>
    <property type="project" value="FlyBase"/>
</dbReference>
<dbReference type="GO" id="GO:0001745">
    <property type="term" value="P:compound eye morphogenesis"/>
    <property type="evidence" value="ECO:0000315"/>
    <property type="project" value="FlyBase"/>
</dbReference>
<dbReference type="GO" id="GO:0042051">
    <property type="term" value="P:compound eye photoreceptor development"/>
    <property type="evidence" value="ECO:0000315"/>
    <property type="project" value="FlyBase"/>
</dbReference>
<dbReference type="GO" id="GO:0007010">
    <property type="term" value="P:cytoskeleton organization"/>
    <property type="evidence" value="ECO:0000318"/>
    <property type="project" value="GO_Central"/>
</dbReference>
<dbReference type="GO" id="GO:0060361">
    <property type="term" value="P:flight"/>
    <property type="evidence" value="ECO:0000315"/>
    <property type="project" value="FlyBase"/>
</dbReference>
<dbReference type="GO" id="GO:0007523">
    <property type="term" value="P:larval visceral muscle development"/>
    <property type="evidence" value="ECO:0000315"/>
    <property type="project" value="FlyBase"/>
</dbReference>
<dbReference type="GO" id="GO:0031887">
    <property type="term" value="P:lipid droplet transport along microtubule"/>
    <property type="evidence" value="ECO:0000315"/>
    <property type="project" value="FlyBase"/>
</dbReference>
<dbReference type="GO" id="GO:0006869">
    <property type="term" value="P:lipid transport"/>
    <property type="evidence" value="ECO:0000315"/>
    <property type="project" value="FlyBase"/>
</dbReference>
<dbReference type="GO" id="GO:0040011">
    <property type="term" value="P:locomotion"/>
    <property type="evidence" value="ECO:0000315"/>
    <property type="project" value="FlyBase"/>
</dbReference>
<dbReference type="GO" id="GO:0035149">
    <property type="term" value="P:lumen formation, open tracheal system"/>
    <property type="evidence" value="ECO:0000315"/>
    <property type="project" value="FlyBase"/>
</dbReference>
<dbReference type="GO" id="GO:0061024">
    <property type="term" value="P:membrane organization"/>
    <property type="evidence" value="ECO:0000315"/>
    <property type="project" value="FlyBase"/>
</dbReference>
<dbReference type="GO" id="GO:0034453">
    <property type="term" value="P:microtubule anchoring"/>
    <property type="evidence" value="ECO:0000316"/>
    <property type="project" value="FlyBase"/>
</dbReference>
<dbReference type="GO" id="GO:0045855">
    <property type="term" value="P:negative regulation of pole plasm oskar mRNA localization"/>
    <property type="evidence" value="ECO:0000315"/>
    <property type="project" value="FlyBase"/>
</dbReference>
<dbReference type="GO" id="GO:0007097">
    <property type="term" value="P:nuclear migration"/>
    <property type="evidence" value="ECO:0000315"/>
    <property type="project" value="FlyBase"/>
</dbReference>
<dbReference type="GO" id="GO:0051647">
    <property type="term" value="P:nucleus localization"/>
    <property type="evidence" value="ECO:0000316"/>
    <property type="project" value="FlyBase"/>
</dbReference>
<dbReference type="GO" id="GO:0006997">
    <property type="term" value="P:nucleus organization"/>
    <property type="evidence" value="ECO:0000316"/>
    <property type="project" value="FlyBase"/>
</dbReference>
<dbReference type="GO" id="GO:0032386">
    <property type="term" value="P:regulation of intracellular transport"/>
    <property type="evidence" value="ECO:0000315"/>
    <property type="project" value="FlyBase"/>
</dbReference>
<dbReference type="GO" id="GO:0035239">
    <property type="term" value="P:tube morphogenesis"/>
    <property type="evidence" value="ECO:0000315"/>
    <property type="project" value="FlyBase"/>
</dbReference>
<dbReference type="InterPro" id="IPR012315">
    <property type="entry name" value="KASH"/>
</dbReference>
<dbReference type="PANTHER" id="PTHR21524">
    <property type="entry name" value="SPECTRIN REPEAT CONTAINING NUCLEAR ENVELOPE PROTEIN 2"/>
    <property type="match status" value="1"/>
</dbReference>
<dbReference type="PANTHER" id="PTHR21524:SF5">
    <property type="entry name" value="SPECTRIN REPEAT CONTAINING NUCLEAR ENVELOPE PROTEIN 2"/>
    <property type="match status" value="1"/>
</dbReference>
<dbReference type="Pfam" id="PF10541">
    <property type="entry name" value="KASH"/>
    <property type="match status" value="1"/>
</dbReference>
<dbReference type="SMART" id="SM01249">
    <property type="entry name" value="KASH"/>
    <property type="match status" value="1"/>
</dbReference>
<dbReference type="PROSITE" id="PS51049">
    <property type="entry name" value="KASH"/>
    <property type="match status" value="1"/>
</dbReference>
<proteinExistence type="evidence at protein level"/>